<sequence length="178" mass="20791">MKDKRRVKRDLPKINERIRFPNIRVISGDGEQLGIMTPAEALAIAEEEDLDLVLVSETAKPPVCRIMDYGKYKFEQEKRAREAKKKQHNADLKEVKMRYKIEEHDYQVRVNSAQRFLKSGDKVKATITFRGREIQHSNLAQKLLDRMAKDLEEVGEIQQRPKREGRNMMMILAPKKST</sequence>
<keyword id="KW-0963">Cytoplasm</keyword>
<keyword id="KW-0396">Initiation factor</keyword>
<keyword id="KW-0648">Protein biosynthesis</keyword>
<keyword id="KW-1185">Reference proteome</keyword>
<name>IF3_PICP2</name>
<accession>B1XM04</accession>
<protein>
    <recommendedName>
        <fullName evidence="1">Translation initiation factor IF-3</fullName>
    </recommendedName>
</protein>
<comment type="function">
    <text evidence="1">IF-3 binds to the 30S ribosomal subunit and shifts the equilibrium between 70S ribosomes and their 50S and 30S subunits in favor of the free subunits, thus enhancing the availability of 30S subunits on which protein synthesis initiation begins.</text>
</comment>
<comment type="subunit">
    <text evidence="1">Monomer.</text>
</comment>
<comment type="subcellular location">
    <subcellularLocation>
        <location evidence="1">Cytoplasm</location>
    </subcellularLocation>
</comment>
<comment type="similarity">
    <text evidence="1">Belongs to the IF-3 family.</text>
</comment>
<feature type="chain" id="PRO_1000092788" description="Translation initiation factor IF-3">
    <location>
        <begin position="1"/>
        <end position="178"/>
    </location>
</feature>
<gene>
    <name evidence="1" type="primary">infC</name>
    <name type="ordered locus">SYNPCC7002_A2702</name>
</gene>
<evidence type="ECO:0000255" key="1">
    <source>
        <dbReference type="HAMAP-Rule" id="MF_00080"/>
    </source>
</evidence>
<proteinExistence type="inferred from homology"/>
<organism>
    <name type="scientific">Picosynechococcus sp. (strain ATCC 27264 / PCC 7002 / PR-6)</name>
    <name type="common">Agmenellum quadruplicatum</name>
    <dbReference type="NCBI Taxonomy" id="32049"/>
    <lineage>
        <taxon>Bacteria</taxon>
        <taxon>Bacillati</taxon>
        <taxon>Cyanobacteriota</taxon>
        <taxon>Cyanophyceae</taxon>
        <taxon>Oscillatoriophycideae</taxon>
        <taxon>Chroococcales</taxon>
        <taxon>Geminocystaceae</taxon>
        <taxon>Picosynechococcus</taxon>
    </lineage>
</organism>
<reference key="1">
    <citation type="submission" date="2008-02" db="EMBL/GenBank/DDBJ databases">
        <title>Complete sequence of Synechococcus sp. PCC 7002.</title>
        <authorList>
            <person name="Li T."/>
            <person name="Zhao J."/>
            <person name="Zhao C."/>
            <person name="Liu Z."/>
            <person name="Zhao F."/>
            <person name="Marquardt J."/>
            <person name="Nomura C.T."/>
            <person name="Persson S."/>
            <person name="Detter J.C."/>
            <person name="Richardson P.M."/>
            <person name="Lanz C."/>
            <person name="Schuster S.C."/>
            <person name="Wang J."/>
            <person name="Li S."/>
            <person name="Huang X."/>
            <person name="Cai T."/>
            <person name="Yu Z."/>
            <person name="Luo J."/>
            <person name="Zhao J."/>
            <person name="Bryant D.A."/>
        </authorList>
    </citation>
    <scope>NUCLEOTIDE SEQUENCE [LARGE SCALE GENOMIC DNA]</scope>
    <source>
        <strain>ATCC 27264 / PCC 7002 / PR-6</strain>
    </source>
</reference>
<dbReference type="EMBL" id="CP000951">
    <property type="protein sequence ID" value="ACB00678.1"/>
    <property type="molecule type" value="Genomic_DNA"/>
</dbReference>
<dbReference type="RefSeq" id="WP_012308296.1">
    <property type="nucleotide sequence ID" value="NZ_JAHHPU010000003.1"/>
</dbReference>
<dbReference type="SMR" id="B1XM04"/>
<dbReference type="STRING" id="32049.SYNPCC7002_A2702"/>
<dbReference type="KEGG" id="syp:SYNPCC7002_A2702"/>
<dbReference type="eggNOG" id="COG0290">
    <property type="taxonomic scope" value="Bacteria"/>
</dbReference>
<dbReference type="HOGENOM" id="CLU_054919_3_2_3"/>
<dbReference type="Proteomes" id="UP000001688">
    <property type="component" value="Chromosome"/>
</dbReference>
<dbReference type="GO" id="GO:0005829">
    <property type="term" value="C:cytosol"/>
    <property type="evidence" value="ECO:0007669"/>
    <property type="project" value="TreeGrafter"/>
</dbReference>
<dbReference type="GO" id="GO:0016020">
    <property type="term" value="C:membrane"/>
    <property type="evidence" value="ECO:0007669"/>
    <property type="project" value="TreeGrafter"/>
</dbReference>
<dbReference type="GO" id="GO:0043022">
    <property type="term" value="F:ribosome binding"/>
    <property type="evidence" value="ECO:0007669"/>
    <property type="project" value="TreeGrafter"/>
</dbReference>
<dbReference type="GO" id="GO:0003743">
    <property type="term" value="F:translation initiation factor activity"/>
    <property type="evidence" value="ECO:0007669"/>
    <property type="project" value="UniProtKB-UniRule"/>
</dbReference>
<dbReference type="GO" id="GO:0032790">
    <property type="term" value="P:ribosome disassembly"/>
    <property type="evidence" value="ECO:0007669"/>
    <property type="project" value="TreeGrafter"/>
</dbReference>
<dbReference type="FunFam" id="3.10.20.80:FF:000001">
    <property type="entry name" value="Translation initiation factor IF-3"/>
    <property type="match status" value="1"/>
</dbReference>
<dbReference type="FunFam" id="3.30.110.10:FF:000001">
    <property type="entry name" value="Translation initiation factor IF-3"/>
    <property type="match status" value="1"/>
</dbReference>
<dbReference type="Gene3D" id="3.30.110.10">
    <property type="entry name" value="Translation initiation factor 3 (IF-3), C-terminal domain"/>
    <property type="match status" value="1"/>
</dbReference>
<dbReference type="Gene3D" id="3.10.20.80">
    <property type="entry name" value="Translation initiation factor 3 (IF-3), N-terminal domain"/>
    <property type="match status" value="1"/>
</dbReference>
<dbReference type="HAMAP" id="MF_00080">
    <property type="entry name" value="IF_3"/>
    <property type="match status" value="1"/>
</dbReference>
<dbReference type="InterPro" id="IPR036788">
    <property type="entry name" value="T_IF-3_C_sf"/>
</dbReference>
<dbReference type="InterPro" id="IPR036787">
    <property type="entry name" value="T_IF-3_N_sf"/>
</dbReference>
<dbReference type="InterPro" id="IPR019813">
    <property type="entry name" value="Translation_initiation_fac3_CS"/>
</dbReference>
<dbReference type="InterPro" id="IPR001288">
    <property type="entry name" value="Translation_initiation_fac_3"/>
</dbReference>
<dbReference type="InterPro" id="IPR019815">
    <property type="entry name" value="Translation_initiation_fac_3_C"/>
</dbReference>
<dbReference type="InterPro" id="IPR019814">
    <property type="entry name" value="Translation_initiation_fac_3_N"/>
</dbReference>
<dbReference type="NCBIfam" id="TIGR00168">
    <property type="entry name" value="infC"/>
    <property type="match status" value="1"/>
</dbReference>
<dbReference type="PANTHER" id="PTHR10938">
    <property type="entry name" value="TRANSLATION INITIATION FACTOR IF-3"/>
    <property type="match status" value="1"/>
</dbReference>
<dbReference type="PANTHER" id="PTHR10938:SF0">
    <property type="entry name" value="TRANSLATION INITIATION FACTOR IF-3, MITOCHONDRIAL"/>
    <property type="match status" value="1"/>
</dbReference>
<dbReference type="Pfam" id="PF00707">
    <property type="entry name" value="IF3_C"/>
    <property type="match status" value="1"/>
</dbReference>
<dbReference type="Pfam" id="PF05198">
    <property type="entry name" value="IF3_N"/>
    <property type="match status" value="1"/>
</dbReference>
<dbReference type="SUPFAM" id="SSF55200">
    <property type="entry name" value="Translation initiation factor IF3, C-terminal domain"/>
    <property type="match status" value="1"/>
</dbReference>
<dbReference type="SUPFAM" id="SSF54364">
    <property type="entry name" value="Translation initiation factor IF3, N-terminal domain"/>
    <property type="match status" value="1"/>
</dbReference>
<dbReference type="PROSITE" id="PS00938">
    <property type="entry name" value="IF3"/>
    <property type="match status" value="1"/>
</dbReference>